<reference key="1">
    <citation type="journal article" date="2005" name="Nat. Biotechnol.">
        <title>Complete genome sequence of the plant commensal Pseudomonas fluorescens Pf-5.</title>
        <authorList>
            <person name="Paulsen I.T."/>
            <person name="Press C.M."/>
            <person name="Ravel J."/>
            <person name="Kobayashi D.Y."/>
            <person name="Myers G.S.A."/>
            <person name="Mavrodi D.V."/>
            <person name="DeBoy R.T."/>
            <person name="Seshadri R."/>
            <person name="Ren Q."/>
            <person name="Madupu R."/>
            <person name="Dodson R.J."/>
            <person name="Durkin A.S."/>
            <person name="Brinkac L.M."/>
            <person name="Daugherty S.C."/>
            <person name="Sullivan S.A."/>
            <person name="Rosovitz M.J."/>
            <person name="Gwinn M.L."/>
            <person name="Zhou L."/>
            <person name="Schneider D.J."/>
            <person name="Cartinhour S.W."/>
            <person name="Nelson W.C."/>
            <person name="Weidman J."/>
            <person name="Watkins K."/>
            <person name="Tran K."/>
            <person name="Khouri H."/>
            <person name="Pierson E.A."/>
            <person name="Pierson L.S. III"/>
            <person name="Thomashow L.S."/>
            <person name="Loper J.E."/>
        </authorList>
    </citation>
    <scope>NUCLEOTIDE SEQUENCE [LARGE SCALE GENOMIC DNA]</scope>
    <source>
        <strain>ATCC BAA-477 / NRRL B-23932 / Pf-5</strain>
    </source>
</reference>
<name>PQQD_PSEF5</name>
<comment type="function">
    <text evidence="1">Functions as a PqqA binding protein and presents PqqA to PqqE, in the pyrroloquinoline quinone (PQQ) biosynthetic pathway.</text>
</comment>
<comment type="pathway">
    <text evidence="1">Cofactor biosynthesis; pyrroloquinoline quinone biosynthesis.</text>
</comment>
<comment type="subunit">
    <text evidence="1">Monomer. Interacts with PqqE.</text>
</comment>
<comment type="similarity">
    <text evidence="1">Belongs to the PqqD family.</text>
</comment>
<gene>
    <name evidence="1" type="primary">pqqD</name>
    <name type="ordered locus">PFL_5676</name>
</gene>
<evidence type="ECO:0000255" key="1">
    <source>
        <dbReference type="HAMAP-Rule" id="MF_00655"/>
    </source>
</evidence>
<protein>
    <recommendedName>
        <fullName evidence="1">PqqA binding protein</fullName>
    </recommendedName>
    <alternativeName>
        <fullName evidence="1">Coenzyme PQQ synthesis protein D</fullName>
    </alternativeName>
    <alternativeName>
        <fullName evidence="1">Pyrroloquinoline quinone biosynthesis protein D</fullName>
    </alternativeName>
</protein>
<accession>Q4K4U9</accession>
<organism>
    <name type="scientific">Pseudomonas fluorescens (strain ATCC BAA-477 / NRRL B-23932 / Pf-5)</name>
    <dbReference type="NCBI Taxonomy" id="220664"/>
    <lineage>
        <taxon>Bacteria</taxon>
        <taxon>Pseudomonadati</taxon>
        <taxon>Pseudomonadota</taxon>
        <taxon>Gammaproteobacteria</taxon>
        <taxon>Pseudomonadales</taxon>
        <taxon>Pseudomonadaceae</taxon>
        <taxon>Pseudomonas</taxon>
    </lineage>
</organism>
<keyword id="KW-0884">PQQ biosynthesis</keyword>
<sequence length="91" mass="10318">MSFDRSKTPRWRPGYRFQYEPAQKGHVLLYPEGMIKLNDSAALIGGLIDGERDVAAIISELEIQFPGVAELGEDIEQFMEVARAQHWIELA</sequence>
<proteinExistence type="inferred from homology"/>
<dbReference type="EMBL" id="CP000076">
    <property type="protein sequence ID" value="AAY94866.1"/>
    <property type="molecule type" value="Genomic_DNA"/>
</dbReference>
<dbReference type="RefSeq" id="WP_011063851.1">
    <property type="nucleotide sequence ID" value="NC_004129.6"/>
</dbReference>
<dbReference type="SMR" id="Q4K4U9"/>
<dbReference type="STRING" id="220664.PFL_5676"/>
<dbReference type="GeneID" id="57478626"/>
<dbReference type="KEGG" id="pfl:PFL_5676"/>
<dbReference type="PATRIC" id="fig|220664.5.peg.5787"/>
<dbReference type="eggNOG" id="ENOG5032Z81">
    <property type="taxonomic scope" value="Bacteria"/>
</dbReference>
<dbReference type="HOGENOM" id="CLU_163864_2_1_6"/>
<dbReference type="UniPathway" id="UPA00539"/>
<dbReference type="Proteomes" id="UP000008540">
    <property type="component" value="Chromosome"/>
</dbReference>
<dbReference type="GO" id="GO:0048038">
    <property type="term" value="F:quinone binding"/>
    <property type="evidence" value="ECO:0007669"/>
    <property type="project" value="InterPro"/>
</dbReference>
<dbReference type="GO" id="GO:0018189">
    <property type="term" value="P:pyrroloquinoline quinone biosynthetic process"/>
    <property type="evidence" value="ECO:0007669"/>
    <property type="project" value="UniProtKB-UniRule"/>
</dbReference>
<dbReference type="Gene3D" id="1.10.10.1150">
    <property type="entry name" value="Coenzyme PQQ synthesis protein D (PqqD)"/>
    <property type="match status" value="1"/>
</dbReference>
<dbReference type="HAMAP" id="MF_00655">
    <property type="entry name" value="PQQ_syn_PqqD"/>
    <property type="match status" value="1"/>
</dbReference>
<dbReference type="InterPro" id="IPR008792">
    <property type="entry name" value="PQQD"/>
</dbReference>
<dbReference type="InterPro" id="IPR022479">
    <property type="entry name" value="PqqD_bac"/>
</dbReference>
<dbReference type="InterPro" id="IPR041881">
    <property type="entry name" value="PqqD_sf"/>
</dbReference>
<dbReference type="NCBIfam" id="TIGR03859">
    <property type="entry name" value="PQQ_PqqD"/>
    <property type="match status" value="1"/>
</dbReference>
<dbReference type="NCBIfam" id="NF002535">
    <property type="entry name" value="PRK02079.1"/>
    <property type="match status" value="1"/>
</dbReference>
<dbReference type="Pfam" id="PF05402">
    <property type="entry name" value="PqqD"/>
    <property type="match status" value="1"/>
</dbReference>
<feature type="chain" id="PRO_1000061687" description="PqqA binding protein">
    <location>
        <begin position="1"/>
        <end position="91"/>
    </location>
</feature>